<proteinExistence type="inferred from homology"/>
<reference key="1">
    <citation type="journal article" date="2004" name="Nat. Biotechnol.">
        <title>Complete sequence and comparative genome analysis of the dairy bacterium Streptococcus thermophilus.</title>
        <authorList>
            <person name="Bolotin A."/>
            <person name="Quinquis B."/>
            <person name="Renault P."/>
            <person name="Sorokin A."/>
            <person name="Ehrlich S.D."/>
            <person name="Kulakauskas S."/>
            <person name="Lapidus A."/>
            <person name="Goltsman E."/>
            <person name="Mazur M."/>
            <person name="Pusch G.D."/>
            <person name="Fonstein M."/>
            <person name="Overbeek R."/>
            <person name="Kyprides N."/>
            <person name="Purnelle B."/>
            <person name="Prozzi D."/>
            <person name="Ngui K."/>
            <person name="Masuy D."/>
            <person name="Hancy F."/>
            <person name="Burteau S."/>
            <person name="Boutry M."/>
            <person name="Delcour J."/>
            <person name="Goffeau A."/>
            <person name="Hols P."/>
        </authorList>
    </citation>
    <scope>NUCLEOTIDE SEQUENCE [LARGE SCALE GENOMIC DNA]</scope>
    <source>
        <strain>CNRZ 1066</strain>
    </source>
</reference>
<comment type="function">
    <text evidence="1">Catalyzes the attachment of tyrosine to tRNA(Tyr) in a two-step reaction: tyrosine is first activated by ATP to form Tyr-AMP and then transferred to the acceptor end of tRNA(Tyr).</text>
</comment>
<comment type="catalytic activity">
    <reaction>
        <text>tRNA(Tyr) + L-tyrosine + ATP = L-tyrosyl-tRNA(Tyr) + AMP + diphosphate + H(+)</text>
        <dbReference type="Rhea" id="RHEA:10220"/>
        <dbReference type="Rhea" id="RHEA-COMP:9706"/>
        <dbReference type="Rhea" id="RHEA-COMP:9707"/>
        <dbReference type="ChEBI" id="CHEBI:15378"/>
        <dbReference type="ChEBI" id="CHEBI:30616"/>
        <dbReference type="ChEBI" id="CHEBI:33019"/>
        <dbReference type="ChEBI" id="CHEBI:58315"/>
        <dbReference type="ChEBI" id="CHEBI:78442"/>
        <dbReference type="ChEBI" id="CHEBI:78536"/>
        <dbReference type="ChEBI" id="CHEBI:456215"/>
        <dbReference type="EC" id="6.1.1.1"/>
    </reaction>
</comment>
<comment type="subunit">
    <text evidence="1">Homodimer.</text>
</comment>
<comment type="subcellular location">
    <subcellularLocation>
        <location evidence="1">Cytoplasm</location>
    </subcellularLocation>
</comment>
<comment type="similarity">
    <text evidence="2">Belongs to the class-I aminoacyl-tRNA synthetase family. TyrS type 1 subfamily.</text>
</comment>
<sequence length="302" mass="34298">MKLFEDLQWRGLVKQYSSDSLIEKLNNGKLTFYIGTDPTADSLHLGHYSSFLIAKRLAKYGHQPIILIGGATALVGDPRGTSERDLAEQEKIFDNFEKLKNQIQKIFPYEIVNNYDWTKNIMAIDFLREFGKHITAGYMSNKELVKRQFATGISFTEFSYMLLQGMDFYHLFTTKGVTLQIAGSDQWGNMTTGIDLVRKKTGEEVFAMTMPLITDEEGKKFGKSEGNAIWISENKNTPEELHNFLLNVSDDIVISLLKKLTFLSRKDIEEIESRHKNGTGYAQGILADTVTFDIHGVSINKK</sequence>
<organism>
    <name type="scientific">Streptococcus thermophilus (strain CNRZ 1066)</name>
    <dbReference type="NCBI Taxonomy" id="299768"/>
    <lineage>
        <taxon>Bacteria</taxon>
        <taxon>Bacillati</taxon>
        <taxon>Bacillota</taxon>
        <taxon>Bacilli</taxon>
        <taxon>Lactobacillales</taxon>
        <taxon>Streptococcaceae</taxon>
        <taxon>Streptococcus</taxon>
    </lineage>
</organism>
<keyword id="KW-0030">Aminoacyl-tRNA synthetase</keyword>
<keyword id="KW-0067">ATP-binding</keyword>
<keyword id="KW-0963">Cytoplasm</keyword>
<keyword id="KW-0436">Ligase</keyword>
<keyword id="KW-0547">Nucleotide-binding</keyword>
<keyword id="KW-0648">Protein biosynthesis</keyword>
<keyword id="KW-0694">RNA-binding</keyword>
<evidence type="ECO:0000250" key="1"/>
<evidence type="ECO:0000305" key="2"/>
<protein>
    <recommendedName>
        <fullName>Tyrosine--tRNA ligase 2</fullName>
        <ecNumber>6.1.1.1</ecNumber>
    </recommendedName>
    <alternativeName>
        <fullName>Tyrosyl-tRNA synthetase 2</fullName>
        <shortName>TyrRS 2</shortName>
    </alternativeName>
</protein>
<name>SYY2_STRT1</name>
<feature type="chain" id="PRO_0000234798" description="Tyrosine--tRNA ligase 2">
    <location>
        <begin position="1"/>
        <end position="302"/>
    </location>
</feature>
<feature type="short sequence motif" description="'HIGH' region">
    <location>
        <begin position="38"/>
        <end position="47"/>
    </location>
</feature>
<feature type="short sequence motif" description="'KMSKS' region">
    <location>
        <begin position="220"/>
        <end position="224"/>
    </location>
</feature>
<feature type="binding site" evidence="1">
    <location>
        <position position="33"/>
    </location>
    <ligand>
        <name>L-tyrosine</name>
        <dbReference type="ChEBI" id="CHEBI:58315"/>
    </ligand>
</feature>
<feature type="binding site" evidence="1">
    <location>
        <position position="160"/>
    </location>
    <ligand>
        <name>L-tyrosine</name>
        <dbReference type="ChEBI" id="CHEBI:58315"/>
    </ligand>
</feature>
<feature type="binding site" evidence="1">
    <location>
        <position position="164"/>
    </location>
    <ligand>
        <name>L-tyrosine</name>
        <dbReference type="ChEBI" id="CHEBI:58315"/>
    </ligand>
</feature>
<feature type="binding site" evidence="1">
    <location>
        <position position="223"/>
    </location>
    <ligand>
        <name>ATP</name>
        <dbReference type="ChEBI" id="CHEBI:30616"/>
    </ligand>
</feature>
<gene>
    <name type="primary">tyrS2</name>
    <name type="synonym">tyrSE</name>
    <name type="ordered locus">str1043</name>
</gene>
<dbReference type="EC" id="6.1.1.1"/>
<dbReference type="EMBL" id="CP000024">
    <property type="protein sequence ID" value="AAV62620.1"/>
    <property type="molecule type" value="Genomic_DNA"/>
</dbReference>
<dbReference type="SMR" id="Q5LZR6"/>
<dbReference type="KEGG" id="stc:str1043"/>
<dbReference type="HOGENOM" id="CLU_024003_0_0_9"/>
<dbReference type="GO" id="GO:0005829">
    <property type="term" value="C:cytosol"/>
    <property type="evidence" value="ECO:0007669"/>
    <property type="project" value="TreeGrafter"/>
</dbReference>
<dbReference type="GO" id="GO:0005524">
    <property type="term" value="F:ATP binding"/>
    <property type="evidence" value="ECO:0007669"/>
    <property type="project" value="UniProtKB-KW"/>
</dbReference>
<dbReference type="GO" id="GO:0003723">
    <property type="term" value="F:RNA binding"/>
    <property type="evidence" value="ECO:0007669"/>
    <property type="project" value="UniProtKB-KW"/>
</dbReference>
<dbReference type="GO" id="GO:0004831">
    <property type="term" value="F:tyrosine-tRNA ligase activity"/>
    <property type="evidence" value="ECO:0007669"/>
    <property type="project" value="UniProtKB-EC"/>
</dbReference>
<dbReference type="GO" id="GO:0006437">
    <property type="term" value="P:tyrosyl-tRNA aminoacylation"/>
    <property type="evidence" value="ECO:0007669"/>
    <property type="project" value="InterPro"/>
</dbReference>
<dbReference type="CDD" id="cd00805">
    <property type="entry name" value="TyrRS_core"/>
    <property type="match status" value="1"/>
</dbReference>
<dbReference type="Gene3D" id="3.40.50.620">
    <property type="entry name" value="HUPs"/>
    <property type="match status" value="1"/>
</dbReference>
<dbReference type="Gene3D" id="1.10.240.10">
    <property type="entry name" value="Tyrosyl-Transfer RNA Synthetase"/>
    <property type="match status" value="1"/>
</dbReference>
<dbReference type="InterPro" id="IPR001412">
    <property type="entry name" value="aa-tRNA-synth_I_CS"/>
</dbReference>
<dbReference type="InterPro" id="IPR002305">
    <property type="entry name" value="aa-tRNA-synth_Ic"/>
</dbReference>
<dbReference type="InterPro" id="IPR014729">
    <property type="entry name" value="Rossmann-like_a/b/a_fold"/>
</dbReference>
<dbReference type="InterPro" id="IPR002307">
    <property type="entry name" value="Tyr-tRNA-ligase"/>
</dbReference>
<dbReference type="InterPro" id="IPR024088">
    <property type="entry name" value="Tyr-tRNA-ligase_bac-type"/>
</dbReference>
<dbReference type="NCBIfam" id="TIGR00234">
    <property type="entry name" value="tyrS"/>
    <property type="match status" value="1"/>
</dbReference>
<dbReference type="PANTHER" id="PTHR11766:SF0">
    <property type="entry name" value="TYROSINE--TRNA LIGASE, MITOCHONDRIAL"/>
    <property type="match status" value="1"/>
</dbReference>
<dbReference type="PANTHER" id="PTHR11766">
    <property type="entry name" value="TYROSYL-TRNA SYNTHETASE"/>
    <property type="match status" value="1"/>
</dbReference>
<dbReference type="Pfam" id="PF00579">
    <property type="entry name" value="tRNA-synt_1b"/>
    <property type="match status" value="1"/>
</dbReference>
<dbReference type="PRINTS" id="PR01040">
    <property type="entry name" value="TRNASYNTHTYR"/>
</dbReference>
<dbReference type="SUPFAM" id="SSF52374">
    <property type="entry name" value="Nucleotidylyl transferase"/>
    <property type="match status" value="1"/>
</dbReference>
<dbReference type="PROSITE" id="PS00178">
    <property type="entry name" value="AA_TRNA_LIGASE_I"/>
    <property type="match status" value="1"/>
</dbReference>
<accession>Q5LZR6</accession>